<keyword id="KW-0106">Calcium</keyword>
<keyword id="KW-0903">Direct protein sequencing</keyword>
<keyword id="KW-1015">Disulfide bond</keyword>
<keyword id="KW-1199">Hemostasis impairing toxin</keyword>
<keyword id="KW-0378">Hydrolase</keyword>
<keyword id="KW-0442">Lipid degradation</keyword>
<keyword id="KW-0443">Lipid metabolism</keyword>
<keyword id="KW-0479">Metal-binding</keyword>
<keyword id="KW-1201">Platelet aggregation inhibiting toxin</keyword>
<keyword id="KW-0964">Secreted</keyword>
<keyword id="KW-0800">Toxin</keyword>
<name>PA2AH_TRIST</name>
<feature type="chain" id="PRO_0000419072" description="Acidic phospholipase A2 CTs-A2">
    <location>
        <begin position="1"/>
        <end position="23" status="greater than"/>
    </location>
</feature>
<feature type="non-terminal residue">
    <location>
        <position position="23"/>
    </location>
</feature>
<proteinExistence type="evidence at protein level"/>
<dbReference type="EC" id="3.1.1.4"/>
<dbReference type="GO" id="GO:0005576">
    <property type="term" value="C:extracellular region"/>
    <property type="evidence" value="ECO:0007669"/>
    <property type="project" value="UniProtKB-SubCell"/>
</dbReference>
<dbReference type="GO" id="GO:0046872">
    <property type="term" value="F:metal ion binding"/>
    <property type="evidence" value="ECO:0007669"/>
    <property type="project" value="UniProtKB-KW"/>
</dbReference>
<dbReference type="GO" id="GO:0004623">
    <property type="term" value="F:phospholipase A2 activity"/>
    <property type="evidence" value="ECO:0007669"/>
    <property type="project" value="UniProtKB-EC"/>
</dbReference>
<dbReference type="GO" id="GO:0090729">
    <property type="term" value="F:toxin activity"/>
    <property type="evidence" value="ECO:0007669"/>
    <property type="project" value="UniProtKB-KW"/>
</dbReference>
<dbReference type="GO" id="GO:0016042">
    <property type="term" value="P:lipid catabolic process"/>
    <property type="evidence" value="ECO:0007669"/>
    <property type="project" value="UniProtKB-KW"/>
</dbReference>
<comment type="function">
    <text evidence="4">Snake venom phospholipase A2 (PLA2) that shows a moderate inhibition of ADP-induced human platelet aggregation when tested on platelet rich plasma. Exhibits moderate hydrolytic activities and prefers the anionic micelles (dPPC with deoxycholate) to the zwitterionic micelles (dPPC with Triton X-100). PLA2 catalyzes the calcium-dependent hydrolysis of the 2-acyl groups in 3-sn-phosphoglycerides.</text>
</comment>
<comment type="catalytic activity">
    <reaction evidence="2 3">
        <text>a 1,2-diacyl-sn-glycero-3-phosphocholine + H2O = a 1-acyl-sn-glycero-3-phosphocholine + a fatty acid + H(+)</text>
        <dbReference type="Rhea" id="RHEA:15801"/>
        <dbReference type="ChEBI" id="CHEBI:15377"/>
        <dbReference type="ChEBI" id="CHEBI:15378"/>
        <dbReference type="ChEBI" id="CHEBI:28868"/>
        <dbReference type="ChEBI" id="CHEBI:57643"/>
        <dbReference type="ChEBI" id="CHEBI:58168"/>
        <dbReference type="EC" id="3.1.1.4"/>
    </reaction>
</comment>
<comment type="cofactor">
    <cofactor evidence="1">
        <name>Ca(2+)</name>
        <dbReference type="ChEBI" id="CHEBI:29108"/>
    </cofactor>
    <text evidence="1">Binds 1 Ca(2+) ion.</text>
</comment>
<comment type="subcellular location">
    <subcellularLocation>
        <location>Secreted</location>
    </subcellularLocation>
</comment>
<comment type="tissue specificity">
    <text>Expressed by the venom gland.</text>
</comment>
<comment type="PTM">
    <text evidence="1">Contains 7 disulfide bonds.</text>
</comment>
<comment type="mass spectrometry"/>
<comment type="similarity">
    <text evidence="5">Belongs to the phospholipase A2 family. Group II subfamily.</text>
</comment>
<evidence type="ECO:0000250" key="1"/>
<evidence type="ECO:0000255" key="2">
    <source>
        <dbReference type="PROSITE-ProRule" id="PRU10035"/>
    </source>
</evidence>
<evidence type="ECO:0000255" key="3">
    <source>
        <dbReference type="PROSITE-ProRule" id="PRU10036"/>
    </source>
</evidence>
<evidence type="ECO:0000269" key="4">
    <source>
    </source>
</evidence>
<evidence type="ECO:0000305" key="5"/>
<accession>P0DJP9</accession>
<sequence>NLMQFELLIMKVAGRSGIVWYSD</sequence>
<protein>
    <recommendedName>
        <fullName>Acidic phospholipase A2 CTs-A2</fullName>
        <shortName>svPLA2</shortName>
        <ecNumber>3.1.1.4</ecNumber>
    </recommendedName>
    <alternativeName>
        <fullName>Phosphatidylcholine 2-acylhydrolase</fullName>
    </alternativeName>
</protein>
<organism>
    <name type="scientific">Trimeresurus stejnegeri</name>
    <name type="common">Chinese green tree viper</name>
    <name type="synonym">Viridovipera stejnegeri</name>
    <dbReference type="NCBI Taxonomy" id="39682"/>
    <lineage>
        <taxon>Eukaryota</taxon>
        <taxon>Metazoa</taxon>
        <taxon>Chordata</taxon>
        <taxon>Craniata</taxon>
        <taxon>Vertebrata</taxon>
        <taxon>Euteleostomi</taxon>
        <taxon>Lepidosauria</taxon>
        <taxon>Squamata</taxon>
        <taxon>Bifurcata</taxon>
        <taxon>Unidentata</taxon>
        <taxon>Episquamata</taxon>
        <taxon>Toxicofera</taxon>
        <taxon>Serpentes</taxon>
        <taxon>Colubroidea</taxon>
        <taxon>Viperidae</taxon>
        <taxon>Crotalinae</taxon>
        <taxon>Trimeresurus</taxon>
    </lineage>
</organism>
<reference key="1">
    <citation type="journal article" date="2004" name="Biochem. J.">
        <title>Venom phospholipases A2 of bamboo viper (Trimeresurus stejnegeri): molecular characterization, geographic variations and evidence of multiple ancestries.</title>
        <authorList>
            <person name="Tsai I.-H."/>
            <person name="Wang Y.-M."/>
            <person name="Chen Y.-H."/>
            <person name="Tsai T.-S."/>
            <person name="Tu M.-C."/>
        </authorList>
    </citation>
    <scope>PROTEIN SEQUENCE</scope>
    <scope>FUNCTION</scope>
    <scope>MASS SPECTROMETRY</scope>
    <source>
        <strain>Chinese</strain>
        <tissue>Venom</tissue>
        <tissue>Venom gland</tissue>
    </source>
</reference>